<keyword id="KW-0067">ATP-binding</keyword>
<keyword id="KW-0436">Ligase</keyword>
<keyword id="KW-0547">Nucleotide-binding</keyword>
<keyword id="KW-0648">Protein biosynthesis</keyword>
<protein>
    <recommendedName>
        <fullName evidence="1">Glutamyl-tRNA(Gln) amidotransferase subunit A</fullName>
        <shortName evidence="1">Glu-ADT subunit A</shortName>
        <ecNumber evidence="1">6.3.5.7</ecNumber>
    </recommendedName>
</protein>
<dbReference type="EC" id="6.3.5.7" evidence="1"/>
<dbReference type="EMBL" id="CP001020">
    <property type="protein sequence ID" value="ACJ20840.1"/>
    <property type="molecule type" value="Genomic_DNA"/>
</dbReference>
<dbReference type="RefSeq" id="WP_005772005.1">
    <property type="nucleotide sequence ID" value="NC_011528.1"/>
</dbReference>
<dbReference type="SMR" id="B6J4H5"/>
<dbReference type="KEGG" id="cbc:CbuK_1705"/>
<dbReference type="HOGENOM" id="CLU_009600_0_3_6"/>
<dbReference type="GO" id="GO:0030956">
    <property type="term" value="C:glutamyl-tRNA(Gln) amidotransferase complex"/>
    <property type="evidence" value="ECO:0007669"/>
    <property type="project" value="InterPro"/>
</dbReference>
<dbReference type="GO" id="GO:0005524">
    <property type="term" value="F:ATP binding"/>
    <property type="evidence" value="ECO:0007669"/>
    <property type="project" value="UniProtKB-KW"/>
</dbReference>
<dbReference type="GO" id="GO:0050567">
    <property type="term" value="F:glutaminyl-tRNA synthase (glutamine-hydrolyzing) activity"/>
    <property type="evidence" value="ECO:0007669"/>
    <property type="project" value="UniProtKB-UniRule"/>
</dbReference>
<dbReference type="GO" id="GO:0006412">
    <property type="term" value="P:translation"/>
    <property type="evidence" value="ECO:0007669"/>
    <property type="project" value="UniProtKB-UniRule"/>
</dbReference>
<dbReference type="Gene3D" id="3.90.1300.10">
    <property type="entry name" value="Amidase signature (AS) domain"/>
    <property type="match status" value="1"/>
</dbReference>
<dbReference type="HAMAP" id="MF_00120">
    <property type="entry name" value="GatA"/>
    <property type="match status" value="1"/>
</dbReference>
<dbReference type="InterPro" id="IPR000120">
    <property type="entry name" value="Amidase"/>
</dbReference>
<dbReference type="InterPro" id="IPR020556">
    <property type="entry name" value="Amidase_CS"/>
</dbReference>
<dbReference type="InterPro" id="IPR023631">
    <property type="entry name" value="Amidase_dom"/>
</dbReference>
<dbReference type="InterPro" id="IPR036928">
    <property type="entry name" value="AS_sf"/>
</dbReference>
<dbReference type="InterPro" id="IPR004412">
    <property type="entry name" value="GatA"/>
</dbReference>
<dbReference type="NCBIfam" id="TIGR00132">
    <property type="entry name" value="gatA"/>
    <property type="match status" value="1"/>
</dbReference>
<dbReference type="PANTHER" id="PTHR11895:SF151">
    <property type="entry name" value="GLUTAMYL-TRNA(GLN) AMIDOTRANSFERASE SUBUNIT A"/>
    <property type="match status" value="1"/>
</dbReference>
<dbReference type="PANTHER" id="PTHR11895">
    <property type="entry name" value="TRANSAMIDASE"/>
    <property type="match status" value="1"/>
</dbReference>
<dbReference type="Pfam" id="PF01425">
    <property type="entry name" value="Amidase"/>
    <property type="match status" value="1"/>
</dbReference>
<dbReference type="SUPFAM" id="SSF75304">
    <property type="entry name" value="Amidase signature (AS) enzymes"/>
    <property type="match status" value="1"/>
</dbReference>
<dbReference type="PROSITE" id="PS00571">
    <property type="entry name" value="AMIDASES"/>
    <property type="match status" value="1"/>
</dbReference>
<proteinExistence type="inferred from homology"/>
<feature type="chain" id="PRO_1000095127" description="Glutamyl-tRNA(Gln) amidotransferase subunit A">
    <location>
        <begin position="1"/>
        <end position="483"/>
    </location>
</feature>
<feature type="active site" description="Charge relay system" evidence="1">
    <location>
        <position position="76"/>
    </location>
</feature>
<feature type="active site" description="Charge relay system" evidence="1">
    <location>
        <position position="151"/>
    </location>
</feature>
<feature type="active site" description="Acyl-ester intermediate" evidence="1">
    <location>
        <position position="175"/>
    </location>
</feature>
<organism>
    <name type="scientific">Coxiella burnetii (strain CbuK_Q154)</name>
    <name type="common">Coxiella burnetii (strain Q154)</name>
    <dbReference type="NCBI Taxonomy" id="434924"/>
    <lineage>
        <taxon>Bacteria</taxon>
        <taxon>Pseudomonadati</taxon>
        <taxon>Pseudomonadota</taxon>
        <taxon>Gammaproteobacteria</taxon>
        <taxon>Legionellales</taxon>
        <taxon>Coxiellaceae</taxon>
        <taxon>Coxiella</taxon>
    </lineage>
</organism>
<reference key="1">
    <citation type="journal article" date="2009" name="Infect. Immun.">
        <title>Comparative genomics reveal extensive transposon-mediated genomic plasticity and diversity among potential effector proteins within the genus Coxiella.</title>
        <authorList>
            <person name="Beare P.A."/>
            <person name="Unsworth N."/>
            <person name="Andoh M."/>
            <person name="Voth D.E."/>
            <person name="Omsland A."/>
            <person name="Gilk S.D."/>
            <person name="Williams K.P."/>
            <person name="Sobral B.W."/>
            <person name="Kupko J.J. III"/>
            <person name="Porcella S.F."/>
            <person name="Samuel J.E."/>
            <person name="Heinzen R.A."/>
        </authorList>
    </citation>
    <scope>NUCLEOTIDE SEQUENCE [LARGE SCALE GENOMIC DNA]</scope>
    <source>
        <strain>CbuK_Q154</strain>
    </source>
</reference>
<evidence type="ECO:0000255" key="1">
    <source>
        <dbReference type="HAMAP-Rule" id="MF_00120"/>
    </source>
</evidence>
<sequence length="483" mass="52562">MHQKTIAELKQDLRDKTISSVELTQHFLDRIKTINPTLNSFISITEEYALTQAKAADARLAKGEATSLTGIPIAQKDIFCTKDIKTSCGSKMLDNFIAPYDATVVEQLNKAGAILIGKTNMDEFAMGSSNENSYFGAVKNPWDLERVPGGSSGGSAAAVAARLVPGATGTDTGGSIRQPAALCGITGLKPTYGRVSRYGMIAFASSLDQAGPMAQTAEDAALLLNALAGHDAKDSTSINKNVPDYTATLTTSLEGLKVGLPKEYFGEGLNSSIAESIETVKKTLEKMGATFIEIQLPHTDFAAPAYYVLAPAECSSNLARYDGVRYGYRCDKPVDLDDLYKRSRTEGFGSEVKRRIMIGTYVLSAGYYDAYYLKAQKIRRLIRDDFMKAFETVDVILTPATPTPAFKLNEKIADPVAMYLSDVYTIAVNLAGLPAIAFPAGFMDQLPIGAQLIGNYFEEARLLNITHRYQQETDWHKQSPKLR</sequence>
<name>GATA_COXB1</name>
<gene>
    <name evidence="1" type="primary">gatA</name>
    <name type="ordered locus">CbuK_1705</name>
</gene>
<comment type="function">
    <text evidence="1">Allows the formation of correctly charged Gln-tRNA(Gln) through the transamidation of misacylated Glu-tRNA(Gln) in organisms which lack glutaminyl-tRNA synthetase. The reaction takes place in the presence of glutamine and ATP through an activated gamma-phospho-Glu-tRNA(Gln).</text>
</comment>
<comment type="catalytic activity">
    <reaction evidence="1">
        <text>L-glutamyl-tRNA(Gln) + L-glutamine + ATP + H2O = L-glutaminyl-tRNA(Gln) + L-glutamate + ADP + phosphate + H(+)</text>
        <dbReference type="Rhea" id="RHEA:17521"/>
        <dbReference type="Rhea" id="RHEA-COMP:9681"/>
        <dbReference type="Rhea" id="RHEA-COMP:9684"/>
        <dbReference type="ChEBI" id="CHEBI:15377"/>
        <dbReference type="ChEBI" id="CHEBI:15378"/>
        <dbReference type="ChEBI" id="CHEBI:29985"/>
        <dbReference type="ChEBI" id="CHEBI:30616"/>
        <dbReference type="ChEBI" id="CHEBI:43474"/>
        <dbReference type="ChEBI" id="CHEBI:58359"/>
        <dbReference type="ChEBI" id="CHEBI:78520"/>
        <dbReference type="ChEBI" id="CHEBI:78521"/>
        <dbReference type="ChEBI" id="CHEBI:456216"/>
        <dbReference type="EC" id="6.3.5.7"/>
    </reaction>
</comment>
<comment type="subunit">
    <text evidence="1">Heterotrimer of A, B and C subunits.</text>
</comment>
<comment type="similarity">
    <text evidence="1">Belongs to the amidase family. GatA subfamily.</text>
</comment>
<accession>B6J4H5</accession>